<gene>
    <name evidence="1" type="primary">rpsH</name>
    <name type="ordered locus">Rxyl_2141</name>
</gene>
<protein>
    <recommendedName>
        <fullName evidence="1">Small ribosomal subunit protein uS8</fullName>
    </recommendedName>
    <alternativeName>
        <fullName evidence="2">30S ribosomal protein S8</fullName>
    </alternativeName>
</protein>
<evidence type="ECO:0000255" key="1">
    <source>
        <dbReference type="HAMAP-Rule" id="MF_01302"/>
    </source>
</evidence>
<evidence type="ECO:0000305" key="2"/>
<feature type="chain" id="PRO_0000290920" description="Small ribosomal subunit protein uS8">
    <location>
        <begin position="1"/>
        <end position="132"/>
    </location>
</feature>
<name>RS8_RUBXD</name>
<sequence>MAVNDPIADMLTRIRNAVMAKHERVEIPHSKMKVEIARILKEEGYVRDYAVRGSGPQQRIVIELKYGPDGERAITGLRRMSRPGRRVYRKQKDIPRVLDGLGVAILSTSQGILTDHEARRKGVGGEVLCFVY</sequence>
<keyword id="KW-1185">Reference proteome</keyword>
<keyword id="KW-0687">Ribonucleoprotein</keyword>
<keyword id="KW-0689">Ribosomal protein</keyword>
<keyword id="KW-0694">RNA-binding</keyword>
<keyword id="KW-0699">rRNA-binding</keyword>
<dbReference type="EMBL" id="CP000386">
    <property type="protein sequence ID" value="ABG05085.1"/>
    <property type="molecule type" value="Genomic_DNA"/>
</dbReference>
<dbReference type="RefSeq" id="WP_011565100.1">
    <property type="nucleotide sequence ID" value="NC_008148.1"/>
</dbReference>
<dbReference type="SMR" id="Q1AU43"/>
<dbReference type="STRING" id="266117.Rxyl_2141"/>
<dbReference type="KEGG" id="rxy:Rxyl_2141"/>
<dbReference type="eggNOG" id="COG0096">
    <property type="taxonomic scope" value="Bacteria"/>
</dbReference>
<dbReference type="HOGENOM" id="CLU_098428_0_2_11"/>
<dbReference type="OrthoDB" id="9802617at2"/>
<dbReference type="PhylomeDB" id="Q1AU43"/>
<dbReference type="Proteomes" id="UP000006637">
    <property type="component" value="Chromosome"/>
</dbReference>
<dbReference type="GO" id="GO:1990904">
    <property type="term" value="C:ribonucleoprotein complex"/>
    <property type="evidence" value="ECO:0007669"/>
    <property type="project" value="UniProtKB-KW"/>
</dbReference>
<dbReference type="GO" id="GO:0005840">
    <property type="term" value="C:ribosome"/>
    <property type="evidence" value="ECO:0007669"/>
    <property type="project" value="UniProtKB-KW"/>
</dbReference>
<dbReference type="GO" id="GO:0019843">
    <property type="term" value="F:rRNA binding"/>
    <property type="evidence" value="ECO:0007669"/>
    <property type="project" value="UniProtKB-UniRule"/>
</dbReference>
<dbReference type="GO" id="GO:0003735">
    <property type="term" value="F:structural constituent of ribosome"/>
    <property type="evidence" value="ECO:0007669"/>
    <property type="project" value="InterPro"/>
</dbReference>
<dbReference type="GO" id="GO:0006412">
    <property type="term" value="P:translation"/>
    <property type="evidence" value="ECO:0007669"/>
    <property type="project" value="UniProtKB-UniRule"/>
</dbReference>
<dbReference type="FunFam" id="3.30.1370.30:FF:000002">
    <property type="entry name" value="30S ribosomal protein S8"/>
    <property type="match status" value="1"/>
</dbReference>
<dbReference type="FunFam" id="3.30.1490.10:FF:000001">
    <property type="entry name" value="30S ribosomal protein S8"/>
    <property type="match status" value="1"/>
</dbReference>
<dbReference type="Gene3D" id="3.30.1370.30">
    <property type="match status" value="1"/>
</dbReference>
<dbReference type="Gene3D" id="3.30.1490.10">
    <property type="match status" value="1"/>
</dbReference>
<dbReference type="HAMAP" id="MF_01302_B">
    <property type="entry name" value="Ribosomal_uS8_B"/>
    <property type="match status" value="1"/>
</dbReference>
<dbReference type="InterPro" id="IPR000630">
    <property type="entry name" value="Ribosomal_uS8"/>
</dbReference>
<dbReference type="InterPro" id="IPR047863">
    <property type="entry name" value="Ribosomal_uS8_CS"/>
</dbReference>
<dbReference type="InterPro" id="IPR035987">
    <property type="entry name" value="Ribosomal_uS8_sf"/>
</dbReference>
<dbReference type="NCBIfam" id="NF001109">
    <property type="entry name" value="PRK00136.1"/>
    <property type="match status" value="1"/>
</dbReference>
<dbReference type="PANTHER" id="PTHR11758">
    <property type="entry name" value="40S RIBOSOMAL PROTEIN S15A"/>
    <property type="match status" value="1"/>
</dbReference>
<dbReference type="Pfam" id="PF00410">
    <property type="entry name" value="Ribosomal_S8"/>
    <property type="match status" value="1"/>
</dbReference>
<dbReference type="SUPFAM" id="SSF56047">
    <property type="entry name" value="Ribosomal protein S8"/>
    <property type="match status" value="1"/>
</dbReference>
<dbReference type="PROSITE" id="PS00053">
    <property type="entry name" value="RIBOSOMAL_S8"/>
    <property type="match status" value="1"/>
</dbReference>
<comment type="function">
    <text evidence="1">One of the primary rRNA binding proteins, it binds directly to 16S rRNA central domain where it helps coordinate assembly of the platform of the 30S subunit.</text>
</comment>
<comment type="subunit">
    <text evidence="1">Part of the 30S ribosomal subunit. Contacts proteins S5 and S12.</text>
</comment>
<comment type="similarity">
    <text evidence="1">Belongs to the universal ribosomal protein uS8 family.</text>
</comment>
<reference key="1">
    <citation type="submission" date="2006-06" db="EMBL/GenBank/DDBJ databases">
        <title>Complete sequence of Rubrobacter xylanophilus DSM 9941.</title>
        <authorList>
            <consortium name="US DOE Joint Genome Institute"/>
            <person name="Copeland A."/>
            <person name="Lucas S."/>
            <person name="Lapidus A."/>
            <person name="Barry K."/>
            <person name="Detter J.C."/>
            <person name="Glavina del Rio T."/>
            <person name="Hammon N."/>
            <person name="Israni S."/>
            <person name="Dalin E."/>
            <person name="Tice H."/>
            <person name="Pitluck S."/>
            <person name="Munk A.C."/>
            <person name="Brettin T."/>
            <person name="Bruce D."/>
            <person name="Han C."/>
            <person name="Tapia R."/>
            <person name="Gilna P."/>
            <person name="Schmutz J."/>
            <person name="Larimer F."/>
            <person name="Land M."/>
            <person name="Hauser L."/>
            <person name="Kyrpides N."/>
            <person name="Lykidis A."/>
            <person name="da Costa M.S."/>
            <person name="Rainey F.A."/>
            <person name="Empadinhas N."/>
            <person name="Jolivet E."/>
            <person name="Battista J.R."/>
            <person name="Richardson P."/>
        </authorList>
    </citation>
    <scope>NUCLEOTIDE SEQUENCE [LARGE SCALE GENOMIC DNA]</scope>
    <source>
        <strain>DSM 9941 / JCM 11954 / NBRC 16129 / PRD-1</strain>
    </source>
</reference>
<organism>
    <name type="scientific">Rubrobacter xylanophilus (strain DSM 9941 / JCM 11954 / NBRC 16129 / PRD-1)</name>
    <dbReference type="NCBI Taxonomy" id="266117"/>
    <lineage>
        <taxon>Bacteria</taxon>
        <taxon>Bacillati</taxon>
        <taxon>Actinomycetota</taxon>
        <taxon>Rubrobacteria</taxon>
        <taxon>Rubrobacterales</taxon>
        <taxon>Rubrobacteraceae</taxon>
        <taxon>Rubrobacter</taxon>
    </lineage>
</organism>
<proteinExistence type="inferred from homology"/>
<accession>Q1AU43</accession>